<organism>
    <name type="scientific">Pisum sativum</name>
    <name type="common">Garden pea</name>
    <name type="synonym">Lathyrus oleraceus</name>
    <dbReference type="NCBI Taxonomy" id="3888"/>
    <lineage>
        <taxon>Eukaryota</taxon>
        <taxon>Viridiplantae</taxon>
        <taxon>Streptophyta</taxon>
        <taxon>Embryophyta</taxon>
        <taxon>Tracheophyta</taxon>
        <taxon>Spermatophyta</taxon>
        <taxon>Magnoliopsida</taxon>
        <taxon>eudicotyledons</taxon>
        <taxon>Gunneridae</taxon>
        <taxon>Pentapetalae</taxon>
        <taxon>rosids</taxon>
        <taxon>fabids</taxon>
        <taxon>Fabales</taxon>
        <taxon>Fabaceae</taxon>
        <taxon>Papilionoideae</taxon>
        <taxon>50 kb inversion clade</taxon>
        <taxon>NPAAA clade</taxon>
        <taxon>Hologalegina</taxon>
        <taxon>IRL clade</taxon>
        <taxon>Fabeae</taxon>
        <taxon>Pisum</taxon>
    </lineage>
</organism>
<feature type="chain" id="PRO_0000234470" description="Unknown protein from spot 107 of 2D-PAGE of thylakoid">
    <location>
        <begin position="1"/>
        <end position="14" status="greater than"/>
    </location>
</feature>
<feature type="non-terminal residue" evidence="2">
    <location>
        <position position="14"/>
    </location>
</feature>
<evidence type="ECO:0000269" key="1">
    <source>
    </source>
</evidence>
<evidence type="ECO:0000303" key="2">
    <source>
    </source>
</evidence>
<evidence type="ECO:0000305" key="3"/>
<name>UT107_PEA</name>
<comment type="subcellular location">
    <subcellularLocation>
        <location evidence="1">Plastid</location>
        <location evidence="1">Chloroplast thylakoid</location>
    </subcellularLocation>
</comment>
<comment type="miscellaneous">
    <text evidence="1">On the 2D-gel the determined pI of this protein is: 6.0, its MW is: 18.3 kDa.</text>
</comment>
<keyword id="KW-0150">Chloroplast</keyword>
<keyword id="KW-0903">Direct protein sequencing</keyword>
<keyword id="KW-0934">Plastid</keyword>
<keyword id="KW-0793">Thylakoid</keyword>
<proteinExistence type="evidence at protein level"/>
<reference evidence="3" key="1">
    <citation type="journal article" date="2000" name="Plant Cell">
        <title>Proteomics of the chloroplast: systematic identification and targeting analysis of lumenal and peripheral thylakoid proteins.</title>
        <authorList>
            <person name="Peltier J.-B."/>
            <person name="Friso G."/>
            <person name="Kalume D.E."/>
            <person name="Roepstorff P."/>
            <person name="Nilsson F."/>
            <person name="Adamska I."/>
            <person name="van Wijk K.J."/>
        </authorList>
    </citation>
    <scope>PROTEIN SEQUENCE</scope>
    <scope>SUBCELLULAR LOCATION</scope>
    <source>
        <strain evidence="1">cv. De Grace</strain>
        <tissue evidence="1">Leaf</tissue>
    </source>
</reference>
<dbReference type="GO" id="GO:0009534">
    <property type="term" value="C:chloroplast thylakoid"/>
    <property type="evidence" value="ECO:0007669"/>
    <property type="project" value="UniProtKB-SubCell"/>
</dbReference>
<protein>
    <recommendedName>
        <fullName>Unknown protein from spot 107 of 2D-PAGE of thylakoid</fullName>
    </recommendedName>
</protein>
<sequence length="14" mass="1580">ATQRLPPLSTEPNR</sequence>
<accession>P82326</accession>